<dbReference type="EMBL" id="AE014184">
    <property type="protein sequence ID" value="AAO44365.1"/>
    <property type="status" value="ALT_INIT"/>
    <property type="molecule type" value="Genomic_DNA"/>
</dbReference>
<dbReference type="SMR" id="Q83GK0"/>
<dbReference type="STRING" id="203267.TWT_268"/>
<dbReference type="KEGG" id="twh:TWT_268"/>
<dbReference type="eggNOG" id="COG0632">
    <property type="taxonomic scope" value="Bacteria"/>
</dbReference>
<dbReference type="HOGENOM" id="CLU_087936_3_0_11"/>
<dbReference type="Proteomes" id="UP000002200">
    <property type="component" value="Chromosome"/>
</dbReference>
<dbReference type="GO" id="GO:0005737">
    <property type="term" value="C:cytoplasm"/>
    <property type="evidence" value="ECO:0007669"/>
    <property type="project" value="UniProtKB-SubCell"/>
</dbReference>
<dbReference type="GO" id="GO:0009379">
    <property type="term" value="C:Holliday junction helicase complex"/>
    <property type="evidence" value="ECO:0007669"/>
    <property type="project" value="InterPro"/>
</dbReference>
<dbReference type="GO" id="GO:0048476">
    <property type="term" value="C:Holliday junction resolvase complex"/>
    <property type="evidence" value="ECO:0007669"/>
    <property type="project" value="UniProtKB-UniRule"/>
</dbReference>
<dbReference type="GO" id="GO:0005524">
    <property type="term" value="F:ATP binding"/>
    <property type="evidence" value="ECO:0007669"/>
    <property type="project" value="InterPro"/>
</dbReference>
<dbReference type="GO" id="GO:0000400">
    <property type="term" value="F:four-way junction DNA binding"/>
    <property type="evidence" value="ECO:0007669"/>
    <property type="project" value="UniProtKB-UniRule"/>
</dbReference>
<dbReference type="GO" id="GO:0009378">
    <property type="term" value="F:four-way junction helicase activity"/>
    <property type="evidence" value="ECO:0007669"/>
    <property type="project" value="InterPro"/>
</dbReference>
<dbReference type="GO" id="GO:0006310">
    <property type="term" value="P:DNA recombination"/>
    <property type="evidence" value="ECO:0007669"/>
    <property type="project" value="UniProtKB-UniRule"/>
</dbReference>
<dbReference type="GO" id="GO:0006281">
    <property type="term" value="P:DNA repair"/>
    <property type="evidence" value="ECO:0007669"/>
    <property type="project" value="UniProtKB-UniRule"/>
</dbReference>
<dbReference type="CDD" id="cd14332">
    <property type="entry name" value="UBA_RuvA_C"/>
    <property type="match status" value="1"/>
</dbReference>
<dbReference type="Gene3D" id="1.10.150.20">
    <property type="entry name" value="5' to 3' exonuclease, C-terminal subdomain"/>
    <property type="match status" value="1"/>
</dbReference>
<dbReference type="Gene3D" id="1.10.8.10">
    <property type="entry name" value="DNA helicase RuvA subunit, C-terminal domain"/>
    <property type="match status" value="1"/>
</dbReference>
<dbReference type="Gene3D" id="2.40.50.140">
    <property type="entry name" value="Nucleic acid-binding proteins"/>
    <property type="match status" value="1"/>
</dbReference>
<dbReference type="HAMAP" id="MF_00031">
    <property type="entry name" value="DNA_HJ_migration_RuvA"/>
    <property type="match status" value="1"/>
</dbReference>
<dbReference type="InterPro" id="IPR013849">
    <property type="entry name" value="DNA_helicase_Holl-junc_RuvA_I"/>
</dbReference>
<dbReference type="InterPro" id="IPR003583">
    <property type="entry name" value="Hlx-hairpin-Hlx_DNA-bd_motif"/>
</dbReference>
<dbReference type="InterPro" id="IPR012340">
    <property type="entry name" value="NA-bd_OB-fold"/>
</dbReference>
<dbReference type="InterPro" id="IPR000085">
    <property type="entry name" value="RuvA"/>
</dbReference>
<dbReference type="InterPro" id="IPR010994">
    <property type="entry name" value="RuvA_2-like"/>
</dbReference>
<dbReference type="InterPro" id="IPR011114">
    <property type="entry name" value="RuvA_C"/>
</dbReference>
<dbReference type="InterPro" id="IPR036267">
    <property type="entry name" value="RuvA_C_sf"/>
</dbReference>
<dbReference type="NCBIfam" id="TIGR00084">
    <property type="entry name" value="ruvA"/>
    <property type="match status" value="1"/>
</dbReference>
<dbReference type="Pfam" id="PF14520">
    <property type="entry name" value="HHH_5"/>
    <property type="match status" value="1"/>
</dbReference>
<dbReference type="Pfam" id="PF07499">
    <property type="entry name" value="RuvA_C"/>
    <property type="match status" value="1"/>
</dbReference>
<dbReference type="Pfam" id="PF01330">
    <property type="entry name" value="RuvA_N"/>
    <property type="match status" value="1"/>
</dbReference>
<dbReference type="SMART" id="SM00278">
    <property type="entry name" value="HhH1"/>
    <property type="match status" value="2"/>
</dbReference>
<dbReference type="SUPFAM" id="SSF46929">
    <property type="entry name" value="DNA helicase RuvA subunit, C-terminal domain"/>
    <property type="match status" value="1"/>
</dbReference>
<dbReference type="SUPFAM" id="SSF50249">
    <property type="entry name" value="Nucleic acid-binding proteins"/>
    <property type="match status" value="1"/>
</dbReference>
<dbReference type="SUPFAM" id="SSF47781">
    <property type="entry name" value="RuvA domain 2-like"/>
    <property type="match status" value="1"/>
</dbReference>
<reference key="1">
    <citation type="journal article" date="2003" name="Genome Res.">
        <title>Tropheryma whipplei twist: a human pathogenic Actinobacteria with a reduced genome.</title>
        <authorList>
            <person name="Raoult D."/>
            <person name="Ogata H."/>
            <person name="Audic S."/>
            <person name="Robert C."/>
            <person name="Suhre K."/>
            <person name="Drancourt M."/>
            <person name="Claverie J.-M."/>
        </authorList>
    </citation>
    <scope>NUCLEOTIDE SEQUENCE [LARGE SCALE GENOMIC DNA]</scope>
    <source>
        <strain>Twist</strain>
    </source>
</reference>
<keyword id="KW-0963">Cytoplasm</keyword>
<keyword id="KW-0227">DNA damage</keyword>
<keyword id="KW-0233">DNA recombination</keyword>
<keyword id="KW-0234">DNA repair</keyword>
<keyword id="KW-0238">DNA-binding</keyword>
<keyword id="KW-1185">Reference proteome</keyword>
<comment type="function">
    <text evidence="1">The RuvA-RuvB-RuvC complex processes Holliday junction (HJ) DNA during genetic recombination and DNA repair, while the RuvA-RuvB complex plays an important role in the rescue of blocked DNA replication forks via replication fork reversal (RFR). RuvA specifically binds to HJ cruciform DNA, conferring on it an open structure. The RuvB hexamer acts as an ATP-dependent pump, pulling dsDNA into and through the RuvAB complex. HJ branch migration allows RuvC to scan DNA until it finds its consensus sequence, where it cleaves and resolves the cruciform DNA.</text>
</comment>
<comment type="subunit">
    <text evidence="1">Homotetramer. Forms an RuvA(8)-RuvB(12)-Holliday junction (HJ) complex. HJ DNA is sandwiched between 2 RuvA tetramers; dsDNA enters through RuvA and exits via RuvB. An RuvB hexamer assembles on each DNA strand where it exits the tetramer. Each RuvB hexamer is contacted by two RuvA subunits (via domain III) on 2 adjacent RuvB subunits; this complex drives branch migration. In the full resolvosome a probable DNA-RuvA(4)-RuvB(12)-RuvC(2) complex forms which resolves the HJ.</text>
</comment>
<comment type="subcellular location">
    <subcellularLocation>
        <location evidence="1">Cytoplasm</location>
    </subcellularLocation>
</comment>
<comment type="domain">
    <text evidence="1">Has three domains with a flexible linker between the domains II and III and assumes an 'L' shape. Domain III is highly mobile and contacts RuvB.</text>
</comment>
<comment type="similarity">
    <text evidence="1">Belongs to the RuvA family.</text>
</comment>
<comment type="sequence caution" evidence="2">
    <conflict type="erroneous initiation">
        <sequence resource="EMBL-CDS" id="AAO44365"/>
    </conflict>
    <text>Extended N-terminus.</text>
</comment>
<feature type="chain" id="PRO_0000094704" description="Holliday junction branch migration complex subunit RuvA">
    <location>
        <begin position="1"/>
        <end position="194"/>
    </location>
</feature>
<feature type="region of interest" description="Domain I" evidence="1">
    <location>
        <begin position="1"/>
        <end position="61"/>
    </location>
</feature>
<feature type="region of interest" description="Domain II" evidence="1">
    <location>
        <begin position="62"/>
        <end position="136"/>
    </location>
</feature>
<feature type="region of interest" description="Flexible linker" evidence="1">
    <location>
        <begin position="136"/>
        <end position="140"/>
    </location>
</feature>
<feature type="region of interest" description="Domain III" evidence="1">
    <location>
        <begin position="141"/>
        <end position="194"/>
    </location>
</feature>
<name>RUVA_TROWT</name>
<sequence length="194" mass="20791">MIASLSGLLEAVRPGSVVVNMHGIGFLVRVPQSFNPEVDAEVKLYTSLQVREDSVSLYGFASVLECTVFEQLITISGVGPRVALAILSVLTPAEVAAAVLEGDDKPLQRVSGVGKKLAGTIVLQLAGKLTSVPLENRKQEQAVDRSAEIVQALIGLGWQRQESAAAVESVLEKDQSLTMPEILRNALRYLAKQE</sequence>
<evidence type="ECO:0000255" key="1">
    <source>
        <dbReference type="HAMAP-Rule" id="MF_00031"/>
    </source>
</evidence>
<evidence type="ECO:0000305" key="2"/>
<gene>
    <name evidence="1" type="primary">ruvA</name>
    <name type="ordered locus">TWT_268</name>
</gene>
<proteinExistence type="inferred from homology"/>
<accession>Q83GK0</accession>
<protein>
    <recommendedName>
        <fullName evidence="1">Holliday junction branch migration complex subunit RuvA</fullName>
    </recommendedName>
</protein>
<organism>
    <name type="scientific">Tropheryma whipplei (strain Twist)</name>
    <name type="common">Whipple's bacillus</name>
    <dbReference type="NCBI Taxonomy" id="203267"/>
    <lineage>
        <taxon>Bacteria</taxon>
        <taxon>Bacillati</taxon>
        <taxon>Actinomycetota</taxon>
        <taxon>Actinomycetes</taxon>
        <taxon>Micrococcales</taxon>
        <taxon>Tropherymataceae</taxon>
        <taxon>Tropheryma</taxon>
    </lineage>
</organism>